<keyword id="KW-0315">Glutamine amidotransferase</keyword>
<keyword id="KW-0378">Hydrolase</keyword>
<keyword id="KW-0456">Lyase</keyword>
<keyword id="KW-0663">Pyridoxal phosphate</keyword>
<keyword id="KW-1185">Reference proteome</keyword>
<organism>
    <name type="scientific">Pyrococcus furiosus (strain ATCC 43587 / DSM 3638 / JCM 8422 / Vc1)</name>
    <dbReference type="NCBI Taxonomy" id="186497"/>
    <lineage>
        <taxon>Archaea</taxon>
        <taxon>Methanobacteriati</taxon>
        <taxon>Methanobacteriota</taxon>
        <taxon>Thermococci</taxon>
        <taxon>Thermococcales</taxon>
        <taxon>Thermococcaceae</taxon>
        <taxon>Pyrococcus</taxon>
    </lineage>
</organism>
<accession>Q8TH23</accession>
<name>PDXT_PYRFU</name>
<protein>
    <recommendedName>
        <fullName evidence="1">Pyridoxal 5'-phosphate synthase subunit PdxT</fullName>
        <ecNumber evidence="1">4.3.3.6</ecNumber>
    </recommendedName>
    <alternativeName>
        <fullName evidence="1">Pdx2</fullName>
    </alternativeName>
    <alternativeName>
        <fullName evidence="1">Pyridoxal 5'-phosphate synthase glutaminase subunit</fullName>
        <ecNumber evidence="1">3.5.1.2</ecNumber>
    </alternativeName>
</protein>
<reference key="1">
    <citation type="journal article" date="1999" name="Genetics">
        <title>Divergence of the hyperthermophilic archaea Pyrococcus furiosus and P. horikoshii inferred from complete genomic sequences.</title>
        <authorList>
            <person name="Maeder D.L."/>
            <person name="Weiss R.B."/>
            <person name="Dunn D.M."/>
            <person name="Cherry J.L."/>
            <person name="Gonzalez J.M."/>
            <person name="DiRuggiero J."/>
            <person name="Robb F.T."/>
        </authorList>
    </citation>
    <scope>NUCLEOTIDE SEQUENCE [LARGE SCALE GENOMIC DNA]</scope>
    <source>
        <strain>ATCC 43587 / DSM 3638 / JCM 8422 / Vc1</strain>
    </source>
</reference>
<comment type="function">
    <text evidence="1">Catalyzes the hydrolysis of glutamine to glutamate and ammonia as part of the biosynthesis of pyridoxal 5'-phosphate. The resulting ammonia molecule is channeled to the active site of PdxS.</text>
</comment>
<comment type="catalytic activity">
    <reaction evidence="1">
        <text>aldehydo-D-ribose 5-phosphate + D-glyceraldehyde 3-phosphate + L-glutamine = pyridoxal 5'-phosphate + L-glutamate + phosphate + 3 H2O + H(+)</text>
        <dbReference type="Rhea" id="RHEA:31507"/>
        <dbReference type="ChEBI" id="CHEBI:15377"/>
        <dbReference type="ChEBI" id="CHEBI:15378"/>
        <dbReference type="ChEBI" id="CHEBI:29985"/>
        <dbReference type="ChEBI" id="CHEBI:43474"/>
        <dbReference type="ChEBI" id="CHEBI:58273"/>
        <dbReference type="ChEBI" id="CHEBI:58359"/>
        <dbReference type="ChEBI" id="CHEBI:59776"/>
        <dbReference type="ChEBI" id="CHEBI:597326"/>
        <dbReference type="EC" id="4.3.3.6"/>
    </reaction>
</comment>
<comment type="catalytic activity">
    <reaction evidence="1">
        <text>L-glutamine + H2O = L-glutamate + NH4(+)</text>
        <dbReference type="Rhea" id="RHEA:15889"/>
        <dbReference type="ChEBI" id="CHEBI:15377"/>
        <dbReference type="ChEBI" id="CHEBI:28938"/>
        <dbReference type="ChEBI" id="CHEBI:29985"/>
        <dbReference type="ChEBI" id="CHEBI:58359"/>
        <dbReference type="EC" id="3.5.1.2"/>
    </reaction>
</comment>
<comment type="pathway">
    <text evidence="1">Cofactor biosynthesis; pyridoxal 5'-phosphate biosynthesis.</text>
</comment>
<comment type="subunit">
    <text evidence="1">In the presence of PdxS, forms a dodecamer of heterodimers. Only shows activity in the heterodimer.</text>
</comment>
<comment type="similarity">
    <text evidence="1">Belongs to the glutaminase PdxT/SNO family.</text>
</comment>
<dbReference type="EC" id="4.3.3.6" evidence="1"/>
<dbReference type="EC" id="3.5.1.2" evidence="1"/>
<dbReference type="EMBL" id="AE009950">
    <property type="protein sequence ID" value="AAL81652.1"/>
    <property type="molecule type" value="Genomic_DNA"/>
</dbReference>
<dbReference type="RefSeq" id="WP_011012675.1">
    <property type="nucleotide sequence ID" value="NZ_CP023154.1"/>
</dbReference>
<dbReference type="SMR" id="Q8TH23"/>
<dbReference type="STRING" id="186497.PF1528"/>
<dbReference type="MEROPS" id="C26.A32"/>
<dbReference type="PaxDb" id="186497-PF1528"/>
<dbReference type="GeneID" id="41713347"/>
<dbReference type="KEGG" id="pfu:PF1528"/>
<dbReference type="PATRIC" id="fig|186497.12.peg.1593"/>
<dbReference type="eggNOG" id="arCOG00034">
    <property type="taxonomic scope" value="Archaea"/>
</dbReference>
<dbReference type="HOGENOM" id="CLU_069674_2_0_2"/>
<dbReference type="OrthoDB" id="26717at2157"/>
<dbReference type="PhylomeDB" id="Q8TH23"/>
<dbReference type="UniPathway" id="UPA00245"/>
<dbReference type="Proteomes" id="UP000001013">
    <property type="component" value="Chromosome"/>
</dbReference>
<dbReference type="GO" id="GO:0005829">
    <property type="term" value="C:cytosol"/>
    <property type="evidence" value="ECO:0007669"/>
    <property type="project" value="TreeGrafter"/>
</dbReference>
<dbReference type="GO" id="GO:1903600">
    <property type="term" value="C:glutaminase complex"/>
    <property type="evidence" value="ECO:0007669"/>
    <property type="project" value="TreeGrafter"/>
</dbReference>
<dbReference type="GO" id="GO:0004359">
    <property type="term" value="F:glutaminase activity"/>
    <property type="evidence" value="ECO:0007669"/>
    <property type="project" value="UniProtKB-UniRule"/>
</dbReference>
<dbReference type="GO" id="GO:0036381">
    <property type="term" value="F:pyridoxal 5'-phosphate synthase (glutamine hydrolysing) activity"/>
    <property type="evidence" value="ECO:0007669"/>
    <property type="project" value="UniProtKB-UniRule"/>
</dbReference>
<dbReference type="GO" id="GO:0006543">
    <property type="term" value="P:glutamine catabolic process"/>
    <property type="evidence" value="ECO:0007669"/>
    <property type="project" value="UniProtKB-UniRule"/>
</dbReference>
<dbReference type="GO" id="GO:0042823">
    <property type="term" value="P:pyridoxal phosphate biosynthetic process"/>
    <property type="evidence" value="ECO:0007669"/>
    <property type="project" value="UniProtKB-UniRule"/>
</dbReference>
<dbReference type="GO" id="GO:0008614">
    <property type="term" value="P:pyridoxine metabolic process"/>
    <property type="evidence" value="ECO:0007669"/>
    <property type="project" value="TreeGrafter"/>
</dbReference>
<dbReference type="CDD" id="cd01749">
    <property type="entry name" value="GATase1_PB"/>
    <property type="match status" value="1"/>
</dbReference>
<dbReference type="FunFam" id="3.40.50.880:FF:000041">
    <property type="entry name" value="Glutamine amidotransferase subunit pdxT, putative"/>
    <property type="match status" value="1"/>
</dbReference>
<dbReference type="Gene3D" id="3.40.50.880">
    <property type="match status" value="1"/>
</dbReference>
<dbReference type="HAMAP" id="MF_01615">
    <property type="entry name" value="PdxT"/>
    <property type="match status" value="1"/>
</dbReference>
<dbReference type="InterPro" id="IPR029062">
    <property type="entry name" value="Class_I_gatase-like"/>
</dbReference>
<dbReference type="InterPro" id="IPR002161">
    <property type="entry name" value="PdxT/SNO"/>
</dbReference>
<dbReference type="InterPro" id="IPR021196">
    <property type="entry name" value="PdxT/SNO_CS"/>
</dbReference>
<dbReference type="NCBIfam" id="TIGR03800">
    <property type="entry name" value="PLP_synth_Pdx2"/>
    <property type="match status" value="1"/>
</dbReference>
<dbReference type="PANTHER" id="PTHR31559">
    <property type="entry name" value="PYRIDOXAL 5'-PHOSPHATE SYNTHASE SUBUNIT SNO"/>
    <property type="match status" value="1"/>
</dbReference>
<dbReference type="PANTHER" id="PTHR31559:SF0">
    <property type="entry name" value="PYRIDOXAL 5'-PHOSPHATE SYNTHASE SUBUNIT SNO1-RELATED"/>
    <property type="match status" value="1"/>
</dbReference>
<dbReference type="Pfam" id="PF01174">
    <property type="entry name" value="SNO"/>
    <property type="match status" value="1"/>
</dbReference>
<dbReference type="PIRSF" id="PIRSF005639">
    <property type="entry name" value="Glut_amidoT_SNO"/>
    <property type="match status" value="1"/>
</dbReference>
<dbReference type="SUPFAM" id="SSF52317">
    <property type="entry name" value="Class I glutamine amidotransferase-like"/>
    <property type="match status" value="1"/>
</dbReference>
<dbReference type="PROSITE" id="PS01236">
    <property type="entry name" value="PDXT_SNO_1"/>
    <property type="match status" value="1"/>
</dbReference>
<dbReference type="PROSITE" id="PS51130">
    <property type="entry name" value="PDXT_SNO_2"/>
    <property type="match status" value="1"/>
</dbReference>
<feature type="chain" id="PRO_0000135688" description="Pyridoxal 5'-phosphate synthase subunit PdxT">
    <location>
        <begin position="1"/>
        <end position="197"/>
    </location>
</feature>
<feature type="active site" description="Nucleophile" evidence="1">
    <location>
        <position position="85"/>
    </location>
</feature>
<feature type="active site" description="Charge relay system" evidence="1">
    <location>
        <position position="179"/>
    </location>
</feature>
<feature type="active site" description="Charge relay system" evidence="1">
    <location>
        <position position="181"/>
    </location>
</feature>
<feature type="binding site" evidence="1">
    <location>
        <begin position="53"/>
        <end position="55"/>
    </location>
    <ligand>
        <name>L-glutamine</name>
        <dbReference type="ChEBI" id="CHEBI:58359"/>
    </ligand>
</feature>
<feature type="binding site" evidence="1">
    <location>
        <position position="114"/>
    </location>
    <ligand>
        <name>L-glutamine</name>
        <dbReference type="ChEBI" id="CHEBI:58359"/>
    </ligand>
</feature>
<feature type="binding site" evidence="1">
    <location>
        <begin position="142"/>
        <end position="143"/>
    </location>
    <ligand>
        <name>L-glutamine</name>
        <dbReference type="ChEBI" id="CHEBI:58359"/>
    </ligand>
</feature>
<sequence>MVKIGVIGLQGDVSEHIEATKRALERLGIEGSVIWVKRPEQLNQIDGVIIPGGESTTISRLMQRTGLFDPLKKMIEDGLPAMGTCAGLIMLAKEVIGATPEQKFLEVLDVKVNRNAYGRQVDSFEAPVKLAFDDKPFIGVFIRAPRIVELLSDKVKPLAWLEDRVVGVEQGNVIGLEFHPELTDDTRIHEYFLKKIV</sequence>
<proteinExistence type="inferred from homology"/>
<gene>
    <name evidence="1" type="primary">pdxT</name>
    <name type="ordered locus">PF1528</name>
</gene>
<evidence type="ECO:0000255" key="1">
    <source>
        <dbReference type="HAMAP-Rule" id="MF_01615"/>
    </source>
</evidence>